<dbReference type="EC" id="2.5.1.29"/>
<dbReference type="EMBL" id="X52291">
    <property type="protein sequence ID" value="CAA36538.1"/>
    <property type="molecule type" value="Genomic_DNA"/>
</dbReference>
<dbReference type="EMBL" id="Z11165">
    <property type="protein sequence ID" value="CAA77545.1"/>
    <property type="molecule type" value="Genomic_DNA"/>
</dbReference>
<dbReference type="EMBL" id="CP001312">
    <property type="protein sequence ID" value="ADE84449.1"/>
    <property type="molecule type" value="Genomic_DNA"/>
</dbReference>
<dbReference type="PIR" id="S04407">
    <property type="entry name" value="S04407"/>
</dbReference>
<dbReference type="RefSeq" id="WP_013066428.1">
    <property type="nucleotide sequence ID" value="NC_014034.1"/>
</dbReference>
<dbReference type="SMR" id="P17060"/>
<dbReference type="STRING" id="272942.RCAP_rcc00684"/>
<dbReference type="GeneID" id="31489630"/>
<dbReference type="KEGG" id="rcp:RCAP_rcc00684"/>
<dbReference type="eggNOG" id="COG0142">
    <property type="taxonomic scope" value="Bacteria"/>
</dbReference>
<dbReference type="HOGENOM" id="CLU_014015_0_1_5"/>
<dbReference type="OrthoDB" id="9805316at2"/>
<dbReference type="BioCyc" id="MetaCyc:MONOMER-14935"/>
<dbReference type="UniPathway" id="UPA00389">
    <property type="reaction ID" value="UER00564"/>
</dbReference>
<dbReference type="Proteomes" id="UP000002361">
    <property type="component" value="Chromosome"/>
</dbReference>
<dbReference type="GO" id="GO:0004311">
    <property type="term" value="F:geranylgeranyl diphosphate synthase activity"/>
    <property type="evidence" value="ECO:0000250"/>
    <property type="project" value="UniProtKB"/>
</dbReference>
<dbReference type="GO" id="GO:0046872">
    <property type="term" value="F:metal ion binding"/>
    <property type="evidence" value="ECO:0007669"/>
    <property type="project" value="UniProtKB-KW"/>
</dbReference>
<dbReference type="GO" id="GO:0016117">
    <property type="term" value="P:carotenoid biosynthetic process"/>
    <property type="evidence" value="ECO:0007669"/>
    <property type="project" value="UniProtKB-KW"/>
</dbReference>
<dbReference type="GO" id="GO:0015995">
    <property type="term" value="P:chlorophyll biosynthetic process"/>
    <property type="evidence" value="ECO:0007669"/>
    <property type="project" value="UniProtKB-KW"/>
</dbReference>
<dbReference type="GO" id="GO:0033386">
    <property type="term" value="P:geranylgeranyl diphosphate biosynthetic process"/>
    <property type="evidence" value="ECO:0000250"/>
    <property type="project" value="UniProtKB"/>
</dbReference>
<dbReference type="GO" id="GO:0015979">
    <property type="term" value="P:photosynthesis"/>
    <property type="evidence" value="ECO:0007669"/>
    <property type="project" value="UniProtKB-KW"/>
</dbReference>
<dbReference type="CDD" id="cd00685">
    <property type="entry name" value="Trans_IPPS_HT"/>
    <property type="match status" value="1"/>
</dbReference>
<dbReference type="FunFam" id="1.10.600.10:FF:000001">
    <property type="entry name" value="Geranylgeranyl diphosphate synthase"/>
    <property type="match status" value="1"/>
</dbReference>
<dbReference type="Gene3D" id="1.10.600.10">
    <property type="entry name" value="Farnesyl Diphosphate Synthase"/>
    <property type="match status" value="1"/>
</dbReference>
<dbReference type="InterPro" id="IPR008949">
    <property type="entry name" value="Isoprenoid_synthase_dom_sf"/>
</dbReference>
<dbReference type="InterPro" id="IPR000092">
    <property type="entry name" value="Polyprenyl_synt"/>
</dbReference>
<dbReference type="InterPro" id="IPR033749">
    <property type="entry name" value="Polyprenyl_synt_CS"/>
</dbReference>
<dbReference type="PANTHER" id="PTHR43281">
    <property type="entry name" value="FARNESYL DIPHOSPHATE SYNTHASE"/>
    <property type="match status" value="1"/>
</dbReference>
<dbReference type="PANTHER" id="PTHR43281:SF1">
    <property type="entry name" value="FARNESYL DIPHOSPHATE SYNTHASE"/>
    <property type="match status" value="1"/>
</dbReference>
<dbReference type="Pfam" id="PF00348">
    <property type="entry name" value="polyprenyl_synt"/>
    <property type="match status" value="1"/>
</dbReference>
<dbReference type="SFLD" id="SFLDS00005">
    <property type="entry name" value="Isoprenoid_Synthase_Type_I"/>
    <property type="match status" value="1"/>
</dbReference>
<dbReference type="SUPFAM" id="SSF48576">
    <property type="entry name" value="Terpenoid synthases"/>
    <property type="match status" value="1"/>
</dbReference>
<dbReference type="PROSITE" id="PS00723">
    <property type="entry name" value="POLYPRENYL_SYNTHASE_1"/>
    <property type="match status" value="1"/>
</dbReference>
<dbReference type="PROSITE" id="PS00444">
    <property type="entry name" value="POLYPRENYL_SYNTHASE_2"/>
    <property type="match status" value="1"/>
</dbReference>
<sequence>MSLDKRIESALVKALSPEALGESPPLLAAALPYGVFPGGARIRPTILVSVALACGDDCPAVTDAAAVALELMHCASLVHDDLPAFDNADIRRGKPSLHKAYNEPLAVLAGDSLLIRGFEVLADVGAVNPDRALKLISKLGQLSGARGGICAGQAWESESKVDLAAYHQAKTGALFIAATQMGAIAAGYEAEPWFDLGMRIGSAFQIADDLKDALMSAEAMGKPAGQDIANERPNAVKTMGIEGARKHLQDVLAGAIASIPSCPGEAKLAQMVQLYAHKIMDIPASAERG</sequence>
<reference key="1">
    <citation type="journal article" date="1989" name="Mol. Gen. Genet.">
        <title>Nucleotide sequence, organization, and nature of the protein products of the carotenoid biosynthesis gene cluster of Rhodobacter capsulatus.</title>
        <authorList>
            <person name="Armstrong G.A."/>
            <person name="Alberti M."/>
            <person name="Leach F."/>
            <person name="Hearst J.E."/>
        </authorList>
    </citation>
    <scope>NUCLEOTIDE SEQUENCE [GENOMIC DNA]</scope>
    <source>
        <strain>ATCC BAA-309 / NBRC 16581 / SB1003</strain>
    </source>
</reference>
<reference key="2">
    <citation type="journal article" date="2010" name="J. Bacteriol.">
        <title>Complete genome sequence of the photosynthetic purple nonsulfur bacterium Rhodobacter capsulatus SB 1003.</title>
        <authorList>
            <person name="Strnad H."/>
            <person name="Lapidus A."/>
            <person name="Paces J."/>
            <person name="Ulbrich P."/>
            <person name="Vlcek C."/>
            <person name="Paces V."/>
            <person name="Haselkorn R."/>
        </authorList>
    </citation>
    <scope>NUCLEOTIDE SEQUENCE [LARGE SCALE GENOMIC DNA]</scope>
    <source>
        <strain>ATCC BAA-309 / NBRC 16581 / SB1003</strain>
    </source>
</reference>
<protein>
    <recommendedName>
        <fullName>Geranylgeranyl diphosphate synthase</fullName>
        <shortName>GGPP synthase</shortName>
        <ecNumber>2.5.1.29</ecNumber>
    </recommendedName>
    <alternativeName>
        <fullName>Farnesyltranstransferase</fullName>
    </alternativeName>
</protein>
<accession>P17060</accession>
<accession>D5AP77</accession>
<feature type="chain" id="PRO_0000123994" description="Geranylgeranyl diphosphate synthase">
    <location>
        <begin position="1"/>
        <end position="289"/>
    </location>
</feature>
<feature type="binding site" evidence="2">
    <location>
        <position position="43"/>
    </location>
    <ligand>
        <name>isopentenyl diphosphate</name>
        <dbReference type="ChEBI" id="CHEBI:128769"/>
    </ligand>
</feature>
<feature type="binding site" evidence="3">
    <location>
        <position position="73"/>
    </location>
    <ligand>
        <name>isopentenyl diphosphate</name>
        <dbReference type="ChEBI" id="CHEBI:128769"/>
    </ligand>
</feature>
<feature type="binding site" evidence="2">
    <location>
        <position position="80"/>
    </location>
    <ligand>
        <name>Mg(2+)</name>
        <dbReference type="ChEBI" id="CHEBI:18420"/>
        <label>1</label>
    </ligand>
</feature>
<feature type="binding site" evidence="2">
    <location>
        <position position="80"/>
    </location>
    <ligand>
        <name>Mg(2+)</name>
        <dbReference type="ChEBI" id="CHEBI:18420"/>
        <label>2</label>
    </ligand>
</feature>
<feature type="binding site" evidence="2">
    <location>
        <position position="86"/>
    </location>
    <ligand>
        <name>Mg(2+)</name>
        <dbReference type="ChEBI" id="CHEBI:18420"/>
        <label>1</label>
    </ligand>
</feature>
<feature type="binding site" evidence="2">
    <location>
        <position position="86"/>
    </location>
    <ligand>
        <name>Mg(2+)</name>
        <dbReference type="ChEBI" id="CHEBI:18420"/>
        <label>2</label>
    </ligand>
</feature>
<feature type="binding site" evidence="1">
    <location>
        <position position="91"/>
    </location>
    <ligand>
        <name>(2E,6E)-farnesyl diphosphate</name>
        <dbReference type="ChEBI" id="CHEBI:175763"/>
    </ligand>
</feature>
<feature type="binding site" evidence="2">
    <location>
        <position position="92"/>
    </location>
    <ligand>
        <name>isopentenyl diphosphate</name>
        <dbReference type="ChEBI" id="CHEBI:128769"/>
    </ligand>
</feature>
<feature type="binding site" evidence="1">
    <location>
        <position position="170"/>
    </location>
    <ligand>
        <name>(2E,6E)-farnesyl diphosphate</name>
        <dbReference type="ChEBI" id="CHEBI:175763"/>
    </ligand>
</feature>
<feature type="binding site" evidence="1">
    <location>
        <position position="171"/>
    </location>
    <ligand>
        <name>(2E,6E)-farnesyl diphosphate</name>
        <dbReference type="ChEBI" id="CHEBI:175763"/>
    </ligand>
</feature>
<feature type="binding site" evidence="1">
    <location>
        <position position="205"/>
    </location>
    <ligand>
        <name>(2E,6E)-farnesyl diphosphate</name>
        <dbReference type="ChEBI" id="CHEBI:175763"/>
    </ligand>
</feature>
<organism>
    <name type="scientific">Rhodobacter capsulatus (strain ATCC BAA-309 / NBRC 16581 / SB1003)</name>
    <dbReference type="NCBI Taxonomy" id="272942"/>
    <lineage>
        <taxon>Bacteria</taxon>
        <taxon>Pseudomonadati</taxon>
        <taxon>Pseudomonadota</taxon>
        <taxon>Alphaproteobacteria</taxon>
        <taxon>Rhodobacterales</taxon>
        <taxon>Rhodobacter group</taxon>
        <taxon>Rhodobacter</taxon>
    </lineage>
</organism>
<gene>
    <name type="primary">crtE</name>
    <name type="ordered locus">RCAP_rcc00684</name>
</gene>
<proteinExistence type="inferred from homology"/>
<name>CRTE_RHOCB</name>
<keyword id="KW-0125">Carotenoid biosynthesis</keyword>
<keyword id="KW-0149">Chlorophyll biosynthesis</keyword>
<keyword id="KW-0414">Isoprene biosynthesis</keyword>
<keyword id="KW-0460">Magnesium</keyword>
<keyword id="KW-0479">Metal-binding</keyword>
<keyword id="KW-0602">Photosynthesis</keyword>
<keyword id="KW-1185">Reference proteome</keyword>
<keyword id="KW-0808">Transferase</keyword>
<evidence type="ECO:0000250" key="1"/>
<evidence type="ECO:0000250" key="2">
    <source>
        <dbReference type="UniProtKB" id="P14324"/>
    </source>
</evidence>
<evidence type="ECO:0000250" key="3">
    <source>
        <dbReference type="UniProtKB" id="Q12051"/>
    </source>
</evidence>
<evidence type="ECO:0000305" key="4"/>
<comment type="function">
    <text evidence="1">Catalyzes the condensation of farnesyl diphosphate (FPP) and isopentenyl diphosphate (IPP) to yield geranylgeranyl diphosphate (GGPP) needed for biosynthesis of carotenoids and diterpenes.</text>
</comment>
<comment type="catalytic activity">
    <reaction>
        <text>isopentenyl diphosphate + (2E,6E)-farnesyl diphosphate = (2E,6E,10E)-geranylgeranyl diphosphate + diphosphate</text>
        <dbReference type="Rhea" id="RHEA:17653"/>
        <dbReference type="ChEBI" id="CHEBI:33019"/>
        <dbReference type="ChEBI" id="CHEBI:58756"/>
        <dbReference type="ChEBI" id="CHEBI:128769"/>
        <dbReference type="ChEBI" id="CHEBI:175763"/>
        <dbReference type="EC" id="2.5.1.29"/>
    </reaction>
</comment>
<comment type="cofactor">
    <cofactor evidence="1">
        <name>Mg(2+)</name>
        <dbReference type="ChEBI" id="CHEBI:18420"/>
    </cofactor>
    <text evidence="1">Binds 2 Mg(2+) ions per subunit.</text>
</comment>
<comment type="pathway">
    <text>Isoprenoid biosynthesis; geranylgeranyl diphosphate biosynthesis; geranylgeranyl diphosphate from farnesyl diphosphate and isopentenyl diphosphate: step 1/1.</text>
</comment>
<comment type="similarity">
    <text evidence="4">Belongs to the FPP/GGPP synthase family.</text>
</comment>